<evidence type="ECO:0000255" key="1">
    <source>
        <dbReference type="HAMAP-Rule" id="MF_00445"/>
    </source>
</evidence>
<reference key="1">
    <citation type="submission" date="2006-09" db="EMBL/GenBank/DDBJ databases">
        <title>Complete sequence of Rhodopseudomonas palustris BisA53.</title>
        <authorList>
            <consortium name="US DOE Joint Genome Institute"/>
            <person name="Copeland A."/>
            <person name="Lucas S."/>
            <person name="Lapidus A."/>
            <person name="Barry K."/>
            <person name="Detter J.C."/>
            <person name="Glavina del Rio T."/>
            <person name="Hammon N."/>
            <person name="Israni S."/>
            <person name="Dalin E."/>
            <person name="Tice H."/>
            <person name="Pitluck S."/>
            <person name="Chain P."/>
            <person name="Malfatti S."/>
            <person name="Shin M."/>
            <person name="Vergez L."/>
            <person name="Schmutz J."/>
            <person name="Larimer F."/>
            <person name="Land M."/>
            <person name="Hauser L."/>
            <person name="Pelletier D.A."/>
            <person name="Kyrpides N."/>
            <person name="Kim E."/>
            <person name="Harwood C.S."/>
            <person name="Oda Y."/>
            <person name="Richardson P."/>
        </authorList>
    </citation>
    <scope>NUCLEOTIDE SEQUENCE [LARGE SCALE GENOMIC DNA]</scope>
    <source>
        <strain>BisA53</strain>
    </source>
</reference>
<organism>
    <name type="scientific">Rhodopseudomonas palustris (strain BisA53)</name>
    <dbReference type="NCBI Taxonomy" id="316055"/>
    <lineage>
        <taxon>Bacteria</taxon>
        <taxon>Pseudomonadati</taxon>
        <taxon>Pseudomonadota</taxon>
        <taxon>Alphaproteobacteria</taxon>
        <taxon>Hyphomicrobiales</taxon>
        <taxon>Nitrobacteraceae</taxon>
        <taxon>Rhodopseudomonas</taxon>
    </lineage>
</organism>
<name>NUON_RHOP5</name>
<protein>
    <recommendedName>
        <fullName evidence="1">NADH-quinone oxidoreductase subunit N</fullName>
        <ecNumber evidence="1">7.1.1.-</ecNumber>
    </recommendedName>
    <alternativeName>
        <fullName evidence="1">NADH dehydrogenase I subunit N</fullName>
    </alternativeName>
    <alternativeName>
        <fullName evidence="1">NDH-1 subunit N</fullName>
    </alternativeName>
</protein>
<sequence length="456" mass="46659">MTAAQLFALSPLAALAIGAVIAMLLAPVTKSAAAARIAAATGLAVAALLEILRAGVPPAPIGALFTDDGLARYGTAYAALFGLAALVFLRVAGVAKEAPALVALVALGAASLTGAGHAATLFLGLELISLSLIALFAFPLTGMALEASYKFLVMSGLATSAQLLGVALIYAETGALDFPGWVGHGPLFALGTALLLAGLAFKFSLAPFHMWTPDAFQGAPAGAAALAGVVSKAAVAIAILRLNSEAQLPQPLWSAGLATLGAASVLVGNVLALRQQLLPRMLGYSTIAHSGYIAMILASGAPGTNEAVLFYLGIYAPALTATLCASAMLGPAPMLEDLRGLARKRPLEATSLSVGLLSLAGLPVAGGFVAKLYLFKALVQSESWILLAIAMVGAALGFYYYIRFFTAPFFGHGGIEPAPRHRFDRLLLIFCFGLIMLFGFEPLVLITAVNSALAVR</sequence>
<gene>
    <name evidence="1" type="primary">nuoN</name>
    <name type="ordered locus">RPE_1722</name>
</gene>
<dbReference type="EC" id="7.1.1.-" evidence="1"/>
<dbReference type="EMBL" id="CP000463">
    <property type="protein sequence ID" value="ABJ05671.1"/>
    <property type="molecule type" value="Genomic_DNA"/>
</dbReference>
<dbReference type="SMR" id="Q07QW3"/>
<dbReference type="STRING" id="316055.RPE_1722"/>
<dbReference type="KEGG" id="rpe:RPE_1722"/>
<dbReference type="eggNOG" id="COG1007">
    <property type="taxonomic scope" value="Bacteria"/>
</dbReference>
<dbReference type="HOGENOM" id="CLU_007100_1_5_5"/>
<dbReference type="OrthoDB" id="8137037at2"/>
<dbReference type="GO" id="GO:0005886">
    <property type="term" value="C:plasma membrane"/>
    <property type="evidence" value="ECO:0007669"/>
    <property type="project" value="UniProtKB-SubCell"/>
</dbReference>
<dbReference type="GO" id="GO:0008137">
    <property type="term" value="F:NADH dehydrogenase (ubiquinone) activity"/>
    <property type="evidence" value="ECO:0007669"/>
    <property type="project" value="InterPro"/>
</dbReference>
<dbReference type="GO" id="GO:0050136">
    <property type="term" value="F:NADH:ubiquinone reductase (non-electrogenic) activity"/>
    <property type="evidence" value="ECO:0007669"/>
    <property type="project" value="UniProtKB-UniRule"/>
</dbReference>
<dbReference type="GO" id="GO:0048038">
    <property type="term" value="F:quinone binding"/>
    <property type="evidence" value="ECO:0007669"/>
    <property type="project" value="UniProtKB-KW"/>
</dbReference>
<dbReference type="GO" id="GO:0042773">
    <property type="term" value="P:ATP synthesis coupled electron transport"/>
    <property type="evidence" value="ECO:0007669"/>
    <property type="project" value="InterPro"/>
</dbReference>
<dbReference type="HAMAP" id="MF_00445">
    <property type="entry name" value="NDH1_NuoN_1"/>
    <property type="match status" value="1"/>
</dbReference>
<dbReference type="InterPro" id="IPR010096">
    <property type="entry name" value="NADH-Q_OxRdtase_suN/2"/>
</dbReference>
<dbReference type="InterPro" id="IPR001750">
    <property type="entry name" value="ND/Mrp_TM"/>
</dbReference>
<dbReference type="PANTHER" id="PTHR22773">
    <property type="entry name" value="NADH DEHYDROGENASE"/>
    <property type="match status" value="1"/>
</dbReference>
<dbReference type="Pfam" id="PF00361">
    <property type="entry name" value="Proton_antipo_M"/>
    <property type="match status" value="1"/>
</dbReference>
<feature type="chain" id="PRO_5000133415" description="NADH-quinone oxidoreductase subunit N">
    <location>
        <begin position="1"/>
        <end position="456"/>
    </location>
</feature>
<feature type="transmembrane region" description="Helical" evidence="1">
    <location>
        <begin position="6"/>
        <end position="26"/>
    </location>
</feature>
<feature type="transmembrane region" description="Helical" evidence="1">
    <location>
        <begin position="45"/>
        <end position="65"/>
    </location>
</feature>
<feature type="transmembrane region" description="Helical" evidence="1">
    <location>
        <begin position="75"/>
        <end position="95"/>
    </location>
</feature>
<feature type="transmembrane region" description="Helical" evidence="1">
    <location>
        <begin position="97"/>
        <end position="117"/>
    </location>
</feature>
<feature type="transmembrane region" description="Helical" evidence="1">
    <location>
        <begin position="118"/>
        <end position="138"/>
    </location>
</feature>
<feature type="transmembrane region" description="Helical" evidence="1">
    <location>
        <begin position="151"/>
        <end position="171"/>
    </location>
</feature>
<feature type="transmembrane region" description="Helical" evidence="1">
    <location>
        <begin position="181"/>
        <end position="201"/>
    </location>
</feature>
<feature type="transmembrane region" description="Helical" evidence="1">
    <location>
        <begin position="220"/>
        <end position="240"/>
    </location>
</feature>
<feature type="transmembrane region" description="Helical" evidence="1">
    <location>
        <begin position="252"/>
        <end position="272"/>
    </location>
</feature>
<feature type="transmembrane region" description="Helical" evidence="1">
    <location>
        <begin position="281"/>
        <end position="301"/>
    </location>
</feature>
<feature type="transmembrane region" description="Helical" evidence="1">
    <location>
        <begin position="308"/>
        <end position="328"/>
    </location>
</feature>
<feature type="transmembrane region" description="Helical" evidence="1">
    <location>
        <begin position="355"/>
        <end position="375"/>
    </location>
</feature>
<feature type="transmembrane region" description="Helical" evidence="1">
    <location>
        <begin position="382"/>
        <end position="402"/>
    </location>
</feature>
<feature type="transmembrane region" description="Helical" evidence="1">
    <location>
        <begin position="426"/>
        <end position="446"/>
    </location>
</feature>
<comment type="function">
    <text evidence="1">NDH-1 shuttles electrons from NADH, via FMN and iron-sulfur (Fe-S) centers, to quinones in the respiratory chain. The immediate electron acceptor for the enzyme in this species is believed to be ubiquinone. Couples the redox reaction to proton translocation (for every two electrons transferred, four hydrogen ions are translocated across the cytoplasmic membrane), and thus conserves the redox energy in a proton gradient.</text>
</comment>
<comment type="catalytic activity">
    <reaction evidence="1">
        <text>a quinone + NADH + 5 H(+)(in) = a quinol + NAD(+) + 4 H(+)(out)</text>
        <dbReference type="Rhea" id="RHEA:57888"/>
        <dbReference type="ChEBI" id="CHEBI:15378"/>
        <dbReference type="ChEBI" id="CHEBI:24646"/>
        <dbReference type="ChEBI" id="CHEBI:57540"/>
        <dbReference type="ChEBI" id="CHEBI:57945"/>
        <dbReference type="ChEBI" id="CHEBI:132124"/>
    </reaction>
</comment>
<comment type="subunit">
    <text evidence="1">NDH-1 is composed of 14 different subunits. Subunits NuoA, H, J, K, L, M, N constitute the membrane sector of the complex.</text>
</comment>
<comment type="subcellular location">
    <subcellularLocation>
        <location evidence="1">Cell inner membrane</location>
        <topology evidence="1">Multi-pass membrane protein</topology>
    </subcellularLocation>
</comment>
<comment type="similarity">
    <text evidence="1">Belongs to the complex I subunit 2 family.</text>
</comment>
<proteinExistence type="inferred from homology"/>
<accession>Q07QW3</accession>
<keyword id="KW-0997">Cell inner membrane</keyword>
<keyword id="KW-1003">Cell membrane</keyword>
<keyword id="KW-0472">Membrane</keyword>
<keyword id="KW-0520">NAD</keyword>
<keyword id="KW-0874">Quinone</keyword>
<keyword id="KW-1278">Translocase</keyword>
<keyword id="KW-0812">Transmembrane</keyword>
<keyword id="KW-1133">Transmembrane helix</keyword>
<keyword id="KW-0813">Transport</keyword>
<keyword id="KW-0830">Ubiquinone</keyword>